<organism>
    <name type="scientific">Yersinia pseudotuberculosis serotype O:1b (strain IP 31758)</name>
    <dbReference type="NCBI Taxonomy" id="349747"/>
    <lineage>
        <taxon>Bacteria</taxon>
        <taxon>Pseudomonadati</taxon>
        <taxon>Pseudomonadota</taxon>
        <taxon>Gammaproteobacteria</taxon>
        <taxon>Enterobacterales</taxon>
        <taxon>Yersiniaceae</taxon>
        <taxon>Yersinia</taxon>
    </lineage>
</organism>
<reference key="1">
    <citation type="journal article" date="2007" name="PLoS Genet.">
        <title>The complete genome sequence of Yersinia pseudotuberculosis IP31758, the causative agent of Far East scarlet-like fever.</title>
        <authorList>
            <person name="Eppinger M."/>
            <person name="Rosovitz M.J."/>
            <person name="Fricke W.F."/>
            <person name="Rasko D.A."/>
            <person name="Kokorina G."/>
            <person name="Fayolle C."/>
            <person name="Lindler L.E."/>
            <person name="Carniel E."/>
            <person name="Ravel J."/>
        </authorList>
    </citation>
    <scope>NUCLEOTIDE SEQUENCE [LARGE SCALE GENOMIC DNA]</scope>
    <source>
        <strain>IP 31758</strain>
    </source>
</reference>
<feature type="chain" id="PRO_1000061053" description="Large ribosomal subunit protein bL27">
    <location>
        <begin position="1"/>
        <end position="85"/>
    </location>
</feature>
<feature type="region of interest" description="Disordered" evidence="2">
    <location>
        <begin position="1"/>
        <end position="20"/>
    </location>
</feature>
<accession>A7FMT7</accession>
<dbReference type="EMBL" id="CP000720">
    <property type="protein sequence ID" value="ABS49619.1"/>
    <property type="molecule type" value="Genomic_DNA"/>
</dbReference>
<dbReference type="RefSeq" id="WP_002210179.1">
    <property type="nucleotide sequence ID" value="NC_009708.1"/>
</dbReference>
<dbReference type="SMR" id="A7FMT7"/>
<dbReference type="GeneID" id="97457883"/>
<dbReference type="KEGG" id="ypi:YpsIP31758_3611"/>
<dbReference type="HOGENOM" id="CLU_095424_4_1_6"/>
<dbReference type="Proteomes" id="UP000002412">
    <property type="component" value="Chromosome"/>
</dbReference>
<dbReference type="GO" id="GO:0022625">
    <property type="term" value="C:cytosolic large ribosomal subunit"/>
    <property type="evidence" value="ECO:0007669"/>
    <property type="project" value="TreeGrafter"/>
</dbReference>
<dbReference type="GO" id="GO:0003735">
    <property type="term" value="F:structural constituent of ribosome"/>
    <property type="evidence" value="ECO:0007669"/>
    <property type="project" value="InterPro"/>
</dbReference>
<dbReference type="GO" id="GO:0006412">
    <property type="term" value="P:translation"/>
    <property type="evidence" value="ECO:0007669"/>
    <property type="project" value="UniProtKB-UniRule"/>
</dbReference>
<dbReference type="FunFam" id="2.40.50.100:FF:000001">
    <property type="entry name" value="50S ribosomal protein L27"/>
    <property type="match status" value="1"/>
</dbReference>
<dbReference type="Gene3D" id="2.40.50.100">
    <property type="match status" value="1"/>
</dbReference>
<dbReference type="HAMAP" id="MF_00539">
    <property type="entry name" value="Ribosomal_bL27"/>
    <property type="match status" value="1"/>
</dbReference>
<dbReference type="InterPro" id="IPR001684">
    <property type="entry name" value="Ribosomal_bL27"/>
</dbReference>
<dbReference type="InterPro" id="IPR018261">
    <property type="entry name" value="Ribosomal_bL27_CS"/>
</dbReference>
<dbReference type="NCBIfam" id="TIGR00062">
    <property type="entry name" value="L27"/>
    <property type="match status" value="1"/>
</dbReference>
<dbReference type="PANTHER" id="PTHR15893:SF0">
    <property type="entry name" value="LARGE RIBOSOMAL SUBUNIT PROTEIN BL27M"/>
    <property type="match status" value="1"/>
</dbReference>
<dbReference type="PANTHER" id="PTHR15893">
    <property type="entry name" value="RIBOSOMAL PROTEIN L27"/>
    <property type="match status" value="1"/>
</dbReference>
<dbReference type="Pfam" id="PF01016">
    <property type="entry name" value="Ribosomal_L27"/>
    <property type="match status" value="1"/>
</dbReference>
<dbReference type="PRINTS" id="PR00063">
    <property type="entry name" value="RIBOSOMALL27"/>
</dbReference>
<dbReference type="SUPFAM" id="SSF110324">
    <property type="entry name" value="Ribosomal L27 protein-like"/>
    <property type="match status" value="1"/>
</dbReference>
<dbReference type="PROSITE" id="PS00831">
    <property type="entry name" value="RIBOSOMAL_L27"/>
    <property type="match status" value="1"/>
</dbReference>
<proteinExistence type="inferred from homology"/>
<evidence type="ECO:0000255" key="1">
    <source>
        <dbReference type="HAMAP-Rule" id="MF_00539"/>
    </source>
</evidence>
<evidence type="ECO:0000256" key="2">
    <source>
        <dbReference type="SAM" id="MobiDB-lite"/>
    </source>
</evidence>
<evidence type="ECO:0000305" key="3"/>
<protein>
    <recommendedName>
        <fullName evidence="1">Large ribosomal subunit protein bL27</fullName>
    </recommendedName>
    <alternativeName>
        <fullName evidence="3">50S ribosomal protein L27</fullName>
    </alternativeName>
</protein>
<gene>
    <name evidence="1" type="primary">rpmA</name>
    <name type="ordered locus">YpsIP31758_3611</name>
</gene>
<keyword id="KW-0687">Ribonucleoprotein</keyword>
<keyword id="KW-0689">Ribosomal protein</keyword>
<name>RL27_YERP3</name>
<sequence>MAHKKAGGSTRNGRDSESKRLGVKRFGGEAVLAGSIIVRQRGTKFHAGINVGCGKDHTLFALADGKVKFEVKGPKNRKFISIEAE</sequence>
<comment type="similarity">
    <text evidence="1">Belongs to the bacterial ribosomal protein bL27 family.</text>
</comment>